<organism>
    <name type="scientific">Ailurus fulgens</name>
    <name type="common">Himalayan red panda</name>
    <dbReference type="NCBI Taxonomy" id="9649"/>
    <lineage>
        <taxon>Eukaryota</taxon>
        <taxon>Metazoa</taxon>
        <taxon>Chordata</taxon>
        <taxon>Craniata</taxon>
        <taxon>Vertebrata</taxon>
        <taxon>Euteleostomi</taxon>
        <taxon>Mammalia</taxon>
        <taxon>Eutheria</taxon>
        <taxon>Laurasiatheria</taxon>
        <taxon>Carnivora</taxon>
        <taxon>Caniformia</taxon>
        <taxon>Musteloidea</taxon>
        <taxon>Ailuridae</taxon>
        <taxon>Ailurus</taxon>
    </lineage>
</organism>
<feature type="chain" id="PRO_0000253744" description="NADH-ubiquinone oxidoreductase chain 3">
    <location>
        <begin position="1"/>
        <end position="115"/>
    </location>
</feature>
<feature type="transmembrane region" description="Helical" evidence="3">
    <location>
        <begin position="3"/>
        <end position="23"/>
    </location>
</feature>
<feature type="transmembrane region" description="Helical" evidence="3">
    <location>
        <begin position="55"/>
        <end position="75"/>
    </location>
</feature>
<feature type="transmembrane region" description="Helical" evidence="3">
    <location>
        <begin position="84"/>
        <end position="104"/>
    </location>
</feature>
<comment type="function">
    <text evidence="1">Core subunit of the mitochondrial membrane respiratory chain NADH dehydrogenase (Complex I) which catalyzes electron transfer from NADH through the respiratory chain, using ubiquinone as an electron acceptor. Essential for the catalytic activity of complex I.</text>
</comment>
<comment type="catalytic activity">
    <reaction evidence="1">
        <text>a ubiquinone + NADH + 5 H(+)(in) = a ubiquinol + NAD(+) + 4 H(+)(out)</text>
        <dbReference type="Rhea" id="RHEA:29091"/>
        <dbReference type="Rhea" id="RHEA-COMP:9565"/>
        <dbReference type="Rhea" id="RHEA-COMP:9566"/>
        <dbReference type="ChEBI" id="CHEBI:15378"/>
        <dbReference type="ChEBI" id="CHEBI:16389"/>
        <dbReference type="ChEBI" id="CHEBI:17976"/>
        <dbReference type="ChEBI" id="CHEBI:57540"/>
        <dbReference type="ChEBI" id="CHEBI:57945"/>
        <dbReference type="EC" id="7.1.1.2"/>
    </reaction>
</comment>
<comment type="subunit">
    <text evidence="1">Core subunit of respiratory chain NADH dehydrogenase (Complex I) which is composed of 45 different subunits. Interacts with TMEM186. Interacts with TMEM242 (By similarity).</text>
</comment>
<comment type="subcellular location">
    <subcellularLocation>
        <location evidence="2">Mitochondrion inner membrane</location>
        <topology evidence="3">Multi-pass membrane protein</topology>
    </subcellularLocation>
</comment>
<comment type="similarity">
    <text evidence="4">Belongs to the complex I subunit 3 family.</text>
</comment>
<evidence type="ECO:0000250" key="1">
    <source>
        <dbReference type="UniProtKB" id="P03897"/>
    </source>
</evidence>
<evidence type="ECO:0000250" key="2">
    <source>
        <dbReference type="UniProtKB" id="P03898"/>
    </source>
</evidence>
<evidence type="ECO:0000255" key="3"/>
<evidence type="ECO:0000305" key="4"/>
<reference key="1">
    <citation type="journal article" date="2005" name="Mol. Phylogenet. Evol.">
        <title>A phylogeny of the Caniformia (order Carnivora) based on 12 complete protein-coding mitochondrial genes.</title>
        <authorList>
            <person name="Delisle I."/>
            <person name="Strobeck C."/>
        </authorList>
    </citation>
    <scope>NUCLEOTIDE SEQUENCE [GENOMIC DNA]</scope>
</reference>
<keyword id="KW-0249">Electron transport</keyword>
<keyword id="KW-0472">Membrane</keyword>
<keyword id="KW-0496">Mitochondrion</keyword>
<keyword id="KW-0999">Mitochondrion inner membrane</keyword>
<keyword id="KW-0520">NAD</keyword>
<keyword id="KW-0679">Respiratory chain</keyword>
<keyword id="KW-1278">Translocase</keyword>
<keyword id="KW-0812">Transmembrane</keyword>
<keyword id="KW-1133">Transmembrane helix</keyword>
<keyword id="KW-0813">Transport</keyword>
<keyword id="KW-0830">Ubiquinone</keyword>
<geneLocation type="mitochondrion"/>
<name>NU3M_AILFU</name>
<accession>Q3L6W3</accession>
<proteinExistence type="inferred from homology"/>
<sequence length="115" mass="13099">MNLIMTLFINITLTSLLVLIAFWLPQLNIYTEKTSPYECGFDPMGSARMPFSMKFFLVAITFLLFDLEIALLLPLPWATQTVNLTTMLTTALLLISLLAVSLAYEWTEKGLEWTE</sequence>
<gene>
    <name evidence="1" type="primary">MT-ND3</name>
    <name type="synonym">MTND3</name>
    <name type="synonym">NADH3</name>
    <name type="synonym">ND3</name>
</gene>
<protein>
    <recommendedName>
        <fullName evidence="1">NADH-ubiquinone oxidoreductase chain 3</fullName>
        <ecNumber evidence="1">7.1.1.2</ecNumber>
    </recommendedName>
    <alternativeName>
        <fullName>NADH dehydrogenase subunit 3</fullName>
    </alternativeName>
</protein>
<dbReference type="EC" id="7.1.1.2" evidence="1"/>
<dbReference type="EMBL" id="AY598525">
    <property type="protein sequence ID" value="AAU00471.1"/>
    <property type="molecule type" value="Genomic_DNA"/>
</dbReference>
<dbReference type="RefSeq" id="YP_002120640.1">
    <property type="nucleotide sequence ID" value="NC_011124.1"/>
</dbReference>
<dbReference type="SMR" id="Q3L6W3"/>
<dbReference type="GeneID" id="6741541"/>
<dbReference type="CTD" id="4537"/>
<dbReference type="GO" id="GO:0005743">
    <property type="term" value="C:mitochondrial inner membrane"/>
    <property type="evidence" value="ECO:0000250"/>
    <property type="project" value="UniProtKB"/>
</dbReference>
<dbReference type="GO" id="GO:0030964">
    <property type="term" value="C:NADH dehydrogenase complex"/>
    <property type="evidence" value="ECO:0007669"/>
    <property type="project" value="TreeGrafter"/>
</dbReference>
<dbReference type="GO" id="GO:0008137">
    <property type="term" value="F:NADH dehydrogenase (ubiquinone) activity"/>
    <property type="evidence" value="ECO:0000250"/>
    <property type="project" value="UniProtKB"/>
</dbReference>
<dbReference type="GO" id="GO:0006120">
    <property type="term" value="P:mitochondrial electron transport, NADH to ubiquinone"/>
    <property type="evidence" value="ECO:0000250"/>
    <property type="project" value="UniProtKB"/>
</dbReference>
<dbReference type="FunFam" id="1.20.58.1610:FF:000004">
    <property type="entry name" value="NADH-quinone oxidoreductase subunit A"/>
    <property type="match status" value="1"/>
</dbReference>
<dbReference type="Gene3D" id="1.20.58.1610">
    <property type="entry name" value="NADH:ubiquinone/plastoquinone oxidoreductase, chain 3"/>
    <property type="match status" value="1"/>
</dbReference>
<dbReference type="InterPro" id="IPR000440">
    <property type="entry name" value="NADH_UbQ/plastoQ_OxRdtase_su3"/>
</dbReference>
<dbReference type="InterPro" id="IPR038430">
    <property type="entry name" value="NDAH_ubi_oxred_su3_sf"/>
</dbReference>
<dbReference type="PANTHER" id="PTHR11058">
    <property type="entry name" value="NADH-UBIQUINONE OXIDOREDUCTASE CHAIN 3"/>
    <property type="match status" value="1"/>
</dbReference>
<dbReference type="PANTHER" id="PTHR11058:SF9">
    <property type="entry name" value="NADH-UBIQUINONE OXIDOREDUCTASE CHAIN 3"/>
    <property type="match status" value="1"/>
</dbReference>
<dbReference type="Pfam" id="PF00507">
    <property type="entry name" value="Oxidored_q4"/>
    <property type="match status" value="1"/>
</dbReference>